<feature type="chain" id="PRO_0000196147" description="Adult-specific rigid cuticular protein 12.6">
    <location>
        <begin position="1"/>
        <end position="127"/>
    </location>
</feature>
<feature type="domain" description="Chitin-binding type R&amp;R" evidence="1">
    <location>
        <begin position="9"/>
        <end position="87"/>
    </location>
</feature>
<dbReference type="GO" id="GO:0062129">
    <property type="term" value="C:chitin-based extracellular matrix"/>
    <property type="evidence" value="ECO:0007669"/>
    <property type="project" value="TreeGrafter"/>
</dbReference>
<dbReference type="GO" id="GO:0008010">
    <property type="term" value="F:structural constituent of chitin-based larval cuticle"/>
    <property type="evidence" value="ECO:0007669"/>
    <property type="project" value="TreeGrafter"/>
</dbReference>
<dbReference type="InterPro" id="IPR031311">
    <property type="entry name" value="CHIT_BIND_RR_consensus"/>
</dbReference>
<dbReference type="InterPro" id="IPR050468">
    <property type="entry name" value="Cuticle_Struct_Prot"/>
</dbReference>
<dbReference type="InterPro" id="IPR000618">
    <property type="entry name" value="Insect_cuticle"/>
</dbReference>
<dbReference type="PANTHER" id="PTHR10380">
    <property type="entry name" value="CUTICLE PROTEIN"/>
    <property type="match status" value="1"/>
</dbReference>
<dbReference type="Pfam" id="PF00379">
    <property type="entry name" value="Chitin_bind_4"/>
    <property type="match status" value="1"/>
</dbReference>
<dbReference type="PRINTS" id="PR00947">
    <property type="entry name" value="CUTICLE"/>
</dbReference>
<dbReference type="PROSITE" id="PS00233">
    <property type="entry name" value="CHIT_BIND_RR_1"/>
    <property type="match status" value="1"/>
</dbReference>
<dbReference type="PROSITE" id="PS51155">
    <property type="entry name" value="CHIT_BIND_RR_2"/>
    <property type="match status" value="1"/>
</dbReference>
<reference key="1">
    <citation type="journal article" date="1996" name="Insect Biochem. Mol. Biol.">
        <title>Purification and characterization of five cuticular proteins from the spider Araneus diadematus.</title>
        <authorList>
            <person name="Norup T."/>
            <person name="Berg T."/>
            <person name="Stenholm H."/>
            <person name="Andersen S.O."/>
            <person name="Hoejrup P."/>
        </authorList>
    </citation>
    <scope>PROTEIN SEQUENCE</scope>
    <scope>MASS SPECTROMETRY</scope>
    <source>
        <tissue>Cuticle</tissue>
    </source>
</reference>
<comment type="function">
    <text>Component of the rigid cuticle of the spider.</text>
</comment>
<comment type="mass spectrometry"/>
<organism>
    <name type="scientific">Araneus diadematus</name>
    <name type="common">European garden spider</name>
    <name type="synonym">Cross spider</name>
    <dbReference type="NCBI Taxonomy" id="45920"/>
    <lineage>
        <taxon>Eukaryota</taxon>
        <taxon>Metazoa</taxon>
        <taxon>Ecdysozoa</taxon>
        <taxon>Arthropoda</taxon>
        <taxon>Chelicerata</taxon>
        <taxon>Arachnida</taxon>
        <taxon>Araneae</taxon>
        <taxon>Araneomorphae</taxon>
        <taxon>Entelegynae</taxon>
        <taxon>Araneoidea</taxon>
        <taxon>Araneidae</taxon>
        <taxon>Araneus</taxon>
    </lineage>
</organism>
<proteinExistence type="evidence at protein level"/>
<evidence type="ECO:0000255" key="1">
    <source>
        <dbReference type="PROSITE-ProRule" id="PRU00497"/>
    </source>
</evidence>
<evidence type="ECO:0000269" key="2">
    <source>
    </source>
</evidence>
<name>CU26_ARADI</name>
<sequence>ADIGMNIAGPAYNFGYNTGDAGGHSRVESGTAGAAAGSYSYIDANGDRRTVHYTAGPDGFKASGDIGVDRRTAAAAAALAALAPKAPVAAAPVAPVAPVVPGAWGYWGAPHVYSAVYPGLAGYAAHW</sequence>
<protein>
    <recommendedName>
        <fullName>Adult-specific rigid cuticular protein 12.6</fullName>
        <shortName>ACP 12.6</shortName>
    </recommendedName>
</protein>
<accession>P80517</accession>
<keyword id="KW-0193">Cuticle</keyword>
<keyword id="KW-0903">Direct protein sequencing</keyword>